<reference key="1">
    <citation type="journal article" date="2007" name="Curr. Biol.">
        <title>Reduced genome of the thioautotrophic intracellular symbiont in a deep-sea clam, Calyptogena okutanii.</title>
        <authorList>
            <person name="Kuwahara H."/>
            <person name="Yoshida T."/>
            <person name="Takaki Y."/>
            <person name="Shimamura S."/>
            <person name="Nishi S."/>
            <person name="Harada M."/>
            <person name="Matsuyama K."/>
            <person name="Takishita K."/>
            <person name="Kawato M."/>
            <person name="Uematsu K."/>
            <person name="Fujiwara Y."/>
            <person name="Sato T."/>
            <person name="Kato C."/>
            <person name="Kitagawa M."/>
            <person name="Kato I."/>
            <person name="Maruyama T."/>
        </authorList>
    </citation>
    <scope>NUCLEOTIDE SEQUENCE [LARGE SCALE GENOMIC DNA]</scope>
    <source>
        <strain>HA</strain>
    </source>
</reference>
<name>RS17_VESOH</name>
<protein>
    <recommendedName>
        <fullName evidence="1">Small ribosomal subunit protein uS17</fullName>
    </recommendedName>
    <alternativeName>
        <fullName evidence="2">30S ribosomal protein S17</fullName>
    </alternativeName>
</protein>
<evidence type="ECO:0000255" key="1">
    <source>
        <dbReference type="HAMAP-Rule" id="MF_01345"/>
    </source>
</evidence>
<evidence type="ECO:0000305" key="2"/>
<proteinExistence type="inferred from homology"/>
<sequence>MNEKKVECVLTGTVVSSNRDKTITVLIERKVRHPIYKKYIKRSTKVHAHDDKNECICGDLVRVVEAKPFSKTKHWSLLEVVERLVSVD</sequence>
<gene>
    <name evidence="1" type="primary">rpsQ</name>
    <name type="ordered locus">COSY_0178</name>
</gene>
<organism>
    <name type="scientific">Vesicomyosocius okutanii subsp. Calyptogena okutanii (strain HA)</name>
    <dbReference type="NCBI Taxonomy" id="412965"/>
    <lineage>
        <taxon>Bacteria</taxon>
        <taxon>Pseudomonadati</taxon>
        <taxon>Pseudomonadota</taxon>
        <taxon>Gammaproteobacteria</taxon>
        <taxon>Candidatus Pseudothioglobaceae</taxon>
        <taxon>Candidatus Vesicomyosocius</taxon>
    </lineage>
</organism>
<keyword id="KW-1185">Reference proteome</keyword>
<keyword id="KW-0687">Ribonucleoprotein</keyword>
<keyword id="KW-0689">Ribosomal protein</keyword>
<keyword id="KW-0694">RNA-binding</keyword>
<keyword id="KW-0699">rRNA-binding</keyword>
<accession>A5CXL3</accession>
<feature type="chain" id="PRO_1000214803" description="Small ribosomal subunit protein uS17">
    <location>
        <begin position="1"/>
        <end position="88"/>
    </location>
</feature>
<comment type="function">
    <text evidence="1">One of the primary rRNA binding proteins, it binds specifically to the 5'-end of 16S ribosomal RNA.</text>
</comment>
<comment type="subunit">
    <text evidence="1">Part of the 30S ribosomal subunit.</text>
</comment>
<comment type="similarity">
    <text evidence="1">Belongs to the universal ribosomal protein uS17 family.</text>
</comment>
<dbReference type="EMBL" id="AP009247">
    <property type="protein sequence ID" value="BAF61308.1"/>
    <property type="molecule type" value="Genomic_DNA"/>
</dbReference>
<dbReference type="RefSeq" id="WP_011929578.1">
    <property type="nucleotide sequence ID" value="NC_009465.1"/>
</dbReference>
<dbReference type="SMR" id="A5CXL3"/>
<dbReference type="STRING" id="412965.COSY_0178"/>
<dbReference type="KEGG" id="vok:COSY_0178"/>
<dbReference type="eggNOG" id="COG0186">
    <property type="taxonomic scope" value="Bacteria"/>
</dbReference>
<dbReference type="HOGENOM" id="CLU_073626_1_1_6"/>
<dbReference type="OrthoDB" id="9811714at2"/>
<dbReference type="Proteomes" id="UP000000247">
    <property type="component" value="Chromosome"/>
</dbReference>
<dbReference type="GO" id="GO:0022627">
    <property type="term" value="C:cytosolic small ribosomal subunit"/>
    <property type="evidence" value="ECO:0007669"/>
    <property type="project" value="TreeGrafter"/>
</dbReference>
<dbReference type="GO" id="GO:0019843">
    <property type="term" value="F:rRNA binding"/>
    <property type="evidence" value="ECO:0007669"/>
    <property type="project" value="UniProtKB-UniRule"/>
</dbReference>
<dbReference type="GO" id="GO:0003735">
    <property type="term" value="F:structural constituent of ribosome"/>
    <property type="evidence" value="ECO:0007669"/>
    <property type="project" value="InterPro"/>
</dbReference>
<dbReference type="GO" id="GO:0006412">
    <property type="term" value="P:translation"/>
    <property type="evidence" value="ECO:0007669"/>
    <property type="project" value="UniProtKB-UniRule"/>
</dbReference>
<dbReference type="CDD" id="cd00364">
    <property type="entry name" value="Ribosomal_uS17"/>
    <property type="match status" value="1"/>
</dbReference>
<dbReference type="Gene3D" id="2.40.50.140">
    <property type="entry name" value="Nucleic acid-binding proteins"/>
    <property type="match status" value="1"/>
</dbReference>
<dbReference type="HAMAP" id="MF_01345_B">
    <property type="entry name" value="Ribosomal_uS17_B"/>
    <property type="match status" value="1"/>
</dbReference>
<dbReference type="InterPro" id="IPR012340">
    <property type="entry name" value="NA-bd_OB-fold"/>
</dbReference>
<dbReference type="InterPro" id="IPR000266">
    <property type="entry name" value="Ribosomal_uS17"/>
</dbReference>
<dbReference type="InterPro" id="IPR019984">
    <property type="entry name" value="Ribosomal_uS17_bact/chlr"/>
</dbReference>
<dbReference type="NCBIfam" id="NF004123">
    <property type="entry name" value="PRK05610.1"/>
    <property type="match status" value="1"/>
</dbReference>
<dbReference type="NCBIfam" id="TIGR03635">
    <property type="entry name" value="uS17_bact"/>
    <property type="match status" value="1"/>
</dbReference>
<dbReference type="PANTHER" id="PTHR10744">
    <property type="entry name" value="40S RIBOSOMAL PROTEIN S11 FAMILY MEMBER"/>
    <property type="match status" value="1"/>
</dbReference>
<dbReference type="PANTHER" id="PTHR10744:SF1">
    <property type="entry name" value="SMALL RIBOSOMAL SUBUNIT PROTEIN US17M"/>
    <property type="match status" value="1"/>
</dbReference>
<dbReference type="Pfam" id="PF00366">
    <property type="entry name" value="Ribosomal_S17"/>
    <property type="match status" value="1"/>
</dbReference>
<dbReference type="PRINTS" id="PR00973">
    <property type="entry name" value="RIBOSOMALS17"/>
</dbReference>
<dbReference type="SUPFAM" id="SSF50249">
    <property type="entry name" value="Nucleic acid-binding proteins"/>
    <property type="match status" value="1"/>
</dbReference>